<comment type="function">
    <text evidence="1">Specifically methylates the N4 position of cytidine in position 1402 (C1402) of 16S rRNA.</text>
</comment>
<comment type="catalytic activity">
    <reaction evidence="1">
        <text>cytidine(1402) in 16S rRNA + S-adenosyl-L-methionine = N(4)-methylcytidine(1402) in 16S rRNA + S-adenosyl-L-homocysteine + H(+)</text>
        <dbReference type="Rhea" id="RHEA:42928"/>
        <dbReference type="Rhea" id="RHEA-COMP:10286"/>
        <dbReference type="Rhea" id="RHEA-COMP:10287"/>
        <dbReference type="ChEBI" id="CHEBI:15378"/>
        <dbReference type="ChEBI" id="CHEBI:57856"/>
        <dbReference type="ChEBI" id="CHEBI:59789"/>
        <dbReference type="ChEBI" id="CHEBI:74506"/>
        <dbReference type="ChEBI" id="CHEBI:82748"/>
        <dbReference type="EC" id="2.1.1.199"/>
    </reaction>
</comment>
<comment type="subcellular location">
    <subcellularLocation>
        <location evidence="1">Cytoplasm</location>
    </subcellularLocation>
</comment>
<comment type="similarity">
    <text evidence="1">Belongs to the methyltransferase superfamily. RsmH family.</text>
</comment>
<protein>
    <recommendedName>
        <fullName evidence="1">Ribosomal RNA small subunit methyltransferase H</fullName>
        <ecNumber evidence="1">2.1.1.199</ecNumber>
    </recommendedName>
    <alternativeName>
        <fullName evidence="1">16S rRNA m(4)C1402 methyltransferase</fullName>
    </alternativeName>
    <alternativeName>
        <fullName evidence="1">rRNA (cytosine-N(4)-)-methyltransferase RsmH</fullName>
    </alternativeName>
</protein>
<sequence length="311" mass="33253">MSAAPHISVLLDEVVEALDAKPGDVVVDGTFGAGGYTRAVLPTGASVVAFDRDPTVRQFAANLPADRFRLVQARFSEMLDELGPESVEGVMLDLGVSSMQLDQAERGFSFMRDGPLDMRMGDTGPTAADLVNTLDHAELAKILYVYGEEHASRRIASFILRRREERPFERTLDLAEVIERAVGGRKGAKVHPATRSFQGLRIAVNDELGELEAGLAAAERVLKPGGRLVVVTFHSLEDRIVKAFLAERAGKAPGGSRHAPPVAAGAAPSFQLISNKAIAPSEAELAVNPRARSSKLRAAVRTDAPVWEAAG</sequence>
<organism>
    <name type="scientific">Caulobacter vibrioides (strain ATCC 19089 / CIP 103742 / CB 15)</name>
    <name type="common">Caulobacter crescentus</name>
    <dbReference type="NCBI Taxonomy" id="190650"/>
    <lineage>
        <taxon>Bacteria</taxon>
        <taxon>Pseudomonadati</taxon>
        <taxon>Pseudomonadota</taxon>
        <taxon>Alphaproteobacteria</taxon>
        <taxon>Caulobacterales</taxon>
        <taxon>Caulobacteraceae</taxon>
        <taxon>Caulobacter</taxon>
    </lineage>
</organism>
<accession>Q9RQJ6</accession>
<feature type="chain" id="PRO_0000108602" description="Ribosomal RNA small subunit methyltransferase H">
    <location>
        <begin position="1"/>
        <end position="311"/>
    </location>
</feature>
<feature type="binding site" evidence="1">
    <location>
        <begin position="34"/>
        <end position="36"/>
    </location>
    <ligand>
        <name>S-adenosyl-L-methionine</name>
        <dbReference type="ChEBI" id="CHEBI:59789"/>
    </ligand>
</feature>
<feature type="binding site" evidence="1">
    <location>
        <position position="51"/>
    </location>
    <ligand>
        <name>S-adenosyl-L-methionine</name>
        <dbReference type="ChEBI" id="CHEBI:59789"/>
    </ligand>
</feature>
<feature type="binding site" evidence="1">
    <location>
        <position position="75"/>
    </location>
    <ligand>
        <name>S-adenosyl-L-methionine</name>
        <dbReference type="ChEBI" id="CHEBI:59789"/>
    </ligand>
</feature>
<feature type="binding site" evidence="1">
    <location>
        <position position="93"/>
    </location>
    <ligand>
        <name>S-adenosyl-L-methionine</name>
        <dbReference type="ChEBI" id="CHEBI:59789"/>
    </ligand>
</feature>
<feature type="binding site" evidence="1">
    <location>
        <position position="100"/>
    </location>
    <ligand>
        <name>S-adenosyl-L-methionine</name>
        <dbReference type="ChEBI" id="CHEBI:59789"/>
    </ligand>
</feature>
<dbReference type="EC" id="2.1.1.199" evidence="1"/>
<dbReference type="EMBL" id="AF099190">
    <property type="protein sequence ID" value="AAF06834.1"/>
    <property type="molecule type" value="Genomic_DNA"/>
</dbReference>
<dbReference type="EMBL" id="AE005673">
    <property type="protein sequence ID" value="AAK24532.1"/>
    <property type="molecule type" value="Genomic_DNA"/>
</dbReference>
<dbReference type="PIR" id="H87566">
    <property type="entry name" value="H87566"/>
</dbReference>
<dbReference type="RefSeq" id="NP_421364.1">
    <property type="nucleotide sequence ID" value="NC_002696.2"/>
</dbReference>
<dbReference type="RefSeq" id="WP_010920418.1">
    <property type="nucleotide sequence ID" value="NC_002696.2"/>
</dbReference>
<dbReference type="SMR" id="Q9RQJ6"/>
<dbReference type="STRING" id="190650.CC_2562"/>
<dbReference type="EnsemblBacteria" id="AAK24532">
    <property type="protein sequence ID" value="AAK24532"/>
    <property type="gene ID" value="CC_2562"/>
</dbReference>
<dbReference type="KEGG" id="ccr:CC_2562"/>
<dbReference type="PATRIC" id="fig|190650.5.peg.2576"/>
<dbReference type="eggNOG" id="COG0275">
    <property type="taxonomic scope" value="Bacteria"/>
</dbReference>
<dbReference type="HOGENOM" id="CLU_038422_1_1_5"/>
<dbReference type="BioCyc" id="CAULO:CC2562-MONOMER"/>
<dbReference type="Proteomes" id="UP000001816">
    <property type="component" value="Chromosome"/>
</dbReference>
<dbReference type="GO" id="GO:0005737">
    <property type="term" value="C:cytoplasm"/>
    <property type="evidence" value="ECO:0007669"/>
    <property type="project" value="UniProtKB-SubCell"/>
</dbReference>
<dbReference type="GO" id="GO:0071424">
    <property type="term" value="F:rRNA (cytosine-N4-)-methyltransferase activity"/>
    <property type="evidence" value="ECO:0007669"/>
    <property type="project" value="UniProtKB-UniRule"/>
</dbReference>
<dbReference type="GO" id="GO:0070475">
    <property type="term" value="P:rRNA base methylation"/>
    <property type="evidence" value="ECO:0007669"/>
    <property type="project" value="UniProtKB-UniRule"/>
</dbReference>
<dbReference type="Gene3D" id="1.10.150.170">
    <property type="entry name" value="Putative methyltransferase TM0872, insert domain"/>
    <property type="match status" value="1"/>
</dbReference>
<dbReference type="Gene3D" id="3.40.50.150">
    <property type="entry name" value="Vaccinia Virus protein VP39"/>
    <property type="match status" value="1"/>
</dbReference>
<dbReference type="HAMAP" id="MF_01007">
    <property type="entry name" value="16SrRNA_methyltr_H"/>
    <property type="match status" value="1"/>
</dbReference>
<dbReference type="InterPro" id="IPR002903">
    <property type="entry name" value="RsmH"/>
</dbReference>
<dbReference type="InterPro" id="IPR023397">
    <property type="entry name" value="SAM-dep_MeTrfase_MraW_recog"/>
</dbReference>
<dbReference type="InterPro" id="IPR029063">
    <property type="entry name" value="SAM-dependent_MTases_sf"/>
</dbReference>
<dbReference type="NCBIfam" id="TIGR00006">
    <property type="entry name" value="16S rRNA (cytosine(1402)-N(4))-methyltransferase RsmH"/>
    <property type="match status" value="1"/>
</dbReference>
<dbReference type="PANTHER" id="PTHR11265:SF0">
    <property type="entry name" value="12S RRNA N4-METHYLCYTIDINE METHYLTRANSFERASE"/>
    <property type="match status" value="1"/>
</dbReference>
<dbReference type="PANTHER" id="PTHR11265">
    <property type="entry name" value="S-ADENOSYL-METHYLTRANSFERASE MRAW"/>
    <property type="match status" value="1"/>
</dbReference>
<dbReference type="Pfam" id="PF01795">
    <property type="entry name" value="Methyltransf_5"/>
    <property type="match status" value="1"/>
</dbReference>
<dbReference type="PIRSF" id="PIRSF004486">
    <property type="entry name" value="MraW"/>
    <property type="match status" value="1"/>
</dbReference>
<dbReference type="SUPFAM" id="SSF81799">
    <property type="entry name" value="Putative methyltransferase TM0872, insert domain"/>
    <property type="match status" value="1"/>
</dbReference>
<dbReference type="SUPFAM" id="SSF53335">
    <property type="entry name" value="S-adenosyl-L-methionine-dependent methyltransferases"/>
    <property type="match status" value="1"/>
</dbReference>
<gene>
    <name evidence="1" type="primary">rsmH</name>
    <name type="synonym">mraW</name>
    <name type="ordered locus">CC_2562</name>
</gene>
<keyword id="KW-0963">Cytoplasm</keyword>
<keyword id="KW-0489">Methyltransferase</keyword>
<keyword id="KW-1185">Reference proteome</keyword>
<keyword id="KW-0698">rRNA processing</keyword>
<keyword id="KW-0949">S-adenosyl-L-methionine</keyword>
<keyword id="KW-0808">Transferase</keyword>
<reference key="1">
    <citation type="submission" date="1998-10" db="EMBL/GenBank/DDBJ databases">
        <title>The divA gene product, penicillin binding protein B, is required for the initiation step of cell division in Caulobacter.</title>
        <authorList>
            <person name="Ohta N."/>
            <person name="Newton A."/>
        </authorList>
    </citation>
    <scope>NUCLEOTIDE SEQUENCE [GENOMIC DNA]</scope>
    <source>
        <strain>ATCC 19089 / CIP 103742 / CB 15</strain>
    </source>
</reference>
<reference key="2">
    <citation type="journal article" date="2001" name="Proc. Natl. Acad. Sci. U.S.A.">
        <title>Complete genome sequence of Caulobacter crescentus.</title>
        <authorList>
            <person name="Nierman W.C."/>
            <person name="Feldblyum T.V."/>
            <person name="Laub M.T."/>
            <person name="Paulsen I.T."/>
            <person name="Nelson K.E."/>
            <person name="Eisen J.A."/>
            <person name="Heidelberg J.F."/>
            <person name="Alley M.R.K."/>
            <person name="Ohta N."/>
            <person name="Maddock J.R."/>
            <person name="Potocka I."/>
            <person name="Nelson W.C."/>
            <person name="Newton A."/>
            <person name="Stephens C."/>
            <person name="Phadke N.D."/>
            <person name="Ely B."/>
            <person name="DeBoy R.T."/>
            <person name="Dodson R.J."/>
            <person name="Durkin A.S."/>
            <person name="Gwinn M.L."/>
            <person name="Haft D.H."/>
            <person name="Kolonay J.F."/>
            <person name="Smit J."/>
            <person name="Craven M.B."/>
            <person name="Khouri H.M."/>
            <person name="Shetty J."/>
            <person name="Berry K.J."/>
            <person name="Utterback T.R."/>
            <person name="Tran K."/>
            <person name="Wolf A.M."/>
            <person name="Vamathevan J.J."/>
            <person name="Ermolaeva M.D."/>
            <person name="White O."/>
            <person name="Salzberg S.L."/>
            <person name="Venter J.C."/>
            <person name="Shapiro L."/>
            <person name="Fraser C.M."/>
        </authorList>
    </citation>
    <scope>NUCLEOTIDE SEQUENCE [LARGE SCALE GENOMIC DNA]</scope>
    <source>
        <strain>ATCC 19089 / CIP 103742 / CB 15</strain>
    </source>
</reference>
<proteinExistence type="inferred from homology"/>
<evidence type="ECO:0000255" key="1">
    <source>
        <dbReference type="HAMAP-Rule" id="MF_01007"/>
    </source>
</evidence>
<name>RSMH_CAUVC</name>